<reference key="1">
    <citation type="journal article" date="2009" name="J. Bacteriol.">
        <title>Complete and draft genome sequences of six members of the Aquificales.</title>
        <authorList>
            <person name="Reysenbach A.-L."/>
            <person name="Hamamura N."/>
            <person name="Podar M."/>
            <person name="Griffiths E."/>
            <person name="Ferreira S."/>
            <person name="Hochstein R."/>
            <person name="Heidelberg J."/>
            <person name="Johnson J."/>
            <person name="Mead D."/>
            <person name="Pohorille A."/>
            <person name="Sarmiento M."/>
            <person name="Schweighofer K."/>
            <person name="Seshadri R."/>
            <person name="Voytek M.A."/>
        </authorList>
    </citation>
    <scope>NUCLEOTIDE SEQUENCE [LARGE SCALE GENOMIC DNA]</scope>
    <source>
        <strain>Y04AAS1</strain>
    </source>
</reference>
<comment type="function">
    <text evidence="1">Component of the acetyl coenzyme A carboxylase (ACC) complex. Biotin carboxylase (BC) catalyzes the carboxylation of biotin on its carrier protein (BCCP) and then the CO(2) group is transferred by the transcarboxylase to acetyl-CoA to form malonyl-CoA.</text>
</comment>
<comment type="catalytic activity">
    <reaction evidence="1">
        <text>N(6)-carboxybiotinyl-L-lysyl-[protein] + acetyl-CoA = N(6)-biotinyl-L-lysyl-[protein] + malonyl-CoA</text>
        <dbReference type="Rhea" id="RHEA:54728"/>
        <dbReference type="Rhea" id="RHEA-COMP:10505"/>
        <dbReference type="Rhea" id="RHEA-COMP:10506"/>
        <dbReference type="ChEBI" id="CHEBI:57288"/>
        <dbReference type="ChEBI" id="CHEBI:57384"/>
        <dbReference type="ChEBI" id="CHEBI:83144"/>
        <dbReference type="ChEBI" id="CHEBI:83145"/>
        <dbReference type="EC" id="2.1.3.15"/>
    </reaction>
</comment>
<comment type="cofactor">
    <cofactor evidence="1">
        <name>Zn(2+)</name>
        <dbReference type="ChEBI" id="CHEBI:29105"/>
    </cofactor>
    <text evidence="1">Binds 1 zinc ion per subunit.</text>
</comment>
<comment type="pathway">
    <text evidence="1">Lipid metabolism; malonyl-CoA biosynthesis; malonyl-CoA from acetyl-CoA: step 1/1.</text>
</comment>
<comment type="subunit">
    <text evidence="1">Acetyl-CoA carboxylase is a heterohexamer composed of biotin carboxyl carrier protein (AccB), biotin carboxylase (AccC) and two subunits each of ACCase subunit alpha (AccA) and ACCase subunit beta (AccD).</text>
</comment>
<comment type="subcellular location">
    <subcellularLocation>
        <location evidence="1">Cytoplasm</location>
    </subcellularLocation>
</comment>
<comment type="similarity">
    <text evidence="1">Belongs to the AccD/PCCB family.</text>
</comment>
<feature type="chain" id="PRO_0000389757" description="Acetyl-coenzyme A carboxylase carboxyl transferase subunit beta">
    <location>
        <begin position="1"/>
        <end position="274"/>
    </location>
</feature>
<feature type="domain" description="CoA carboxyltransferase N-terminal" evidence="2">
    <location>
        <begin position="16"/>
        <end position="274"/>
    </location>
</feature>
<feature type="zinc finger region" description="C4-type" evidence="1">
    <location>
        <begin position="20"/>
        <end position="42"/>
    </location>
</feature>
<feature type="binding site" evidence="1">
    <location>
        <position position="20"/>
    </location>
    <ligand>
        <name>Zn(2+)</name>
        <dbReference type="ChEBI" id="CHEBI:29105"/>
    </ligand>
</feature>
<feature type="binding site" evidence="1">
    <location>
        <position position="23"/>
    </location>
    <ligand>
        <name>Zn(2+)</name>
        <dbReference type="ChEBI" id="CHEBI:29105"/>
    </ligand>
</feature>
<feature type="binding site" evidence="1">
    <location>
        <position position="39"/>
    </location>
    <ligand>
        <name>Zn(2+)</name>
        <dbReference type="ChEBI" id="CHEBI:29105"/>
    </ligand>
</feature>
<feature type="binding site" evidence="1">
    <location>
        <position position="42"/>
    </location>
    <ligand>
        <name>Zn(2+)</name>
        <dbReference type="ChEBI" id="CHEBI:29105"/>
    </ligand>
</feature>
<protein>
    <recommendedName>
        <fullName evidence="1">Acetyl-coenzyme A carboxylase carboxyl transferase subunit beta</fullName>
        <shortName evidence="1">ACCase subunit beta</shortName>
        <shortName evidence="1">Acetyl-CoA carboxylase carboxyltransferase subunit beta</shortName>
        <ecNumber evidence="1">2.1.3.15</ecNumber>
    </recommendedName>
</protein>
<evidence type="ECO:0000255" key="1">
    <source>
        <dbReference type="HAMAP-Rule" id="MF_01395"/>
    </source>
</evidence>
<evidence type="ECO:0000255" key="2">
    <source>
        <dbReference type="PROSITE-ProRule" id="PRU01136"/>
    </source>
</evidence>
<keyword id="KW-0067">ATP-binding</keyword>
<keyword id="KW-0963">Cytoplasm</keyword>
<keyword id="KW-0275">Fatty acid biosynthesis</keyword>
<keyword id="KW-0276">Fatty acid metabolism</keyword>
<keyword id="KW-0444">Lipid biosynthesis</keyword>
<keyword id="KW-0443">Lipid metabolism</keyword>
<keyword id="KW-0479">Metal-binding</keyword>
<keyword id="KW-0547">Nucleotide-binding</keyword>
<keyword id="KW-0808">Transferase</keyword>
<keyword id="KW-0862">Zinc</keyword>
<keyword id="KW-0863">Zinc-finger</keyword>
<name>ACCD_HYDS0</name>
<proteinExistence type="inferred from homology"/>
<gene>
    <name evidence="1" type="primary">accD</name>
    <name type="ordered locus">HY04AAS1_0829</name>
</gene>
<sequence length="274" mass="30999">MGILDFFRKKEKKENLWTKCEECKNILLAQELETNFYVCPKCGHHHQMNPYLWASMLLDYNYNVLFEYILPTDFLSFKDTKRYKDRLKTLKETSNTSEAMTVFDGKLSDYPVVLSVMDFSFIGGSMGSVVGERFKLASLKAVQDKKPHISVVTSGGARMQESVISLMQMAKTSIAVDIMHKNGIPFITVLTNPTTGGVSASFAFLGDVIIAEPKAIIGFAGARVIEQTIKQQLPEDFQTSEFLLKKGMVDMVVHRHLMKQTLKNLLNLLFYKNA</sequence>
<dbReference type="EC" id="2.1.3.15" evidence="1"/>
<dbReference type="EMBL" id="CP001130">
    <property type="protein sequence ID" value="ACG57516.1"/>
    <property type="molecule type" value="Genomic_DNA"/>
</dbReference>
<dbReference type="RefSeq" id="WP_012513872.1">
    <property type="nucleotide sequence ID" value="NC_011126.1"/>
</dbReference>
<dbReference type="SMR" id="B4U8Q5"/>
<dbReference type="STRING" id="380749.HY04AAS1_0829"/>
<dbReference type="KEGG" id="hya:HY04AAS1_0829"/>
<dbReference type="eggNOG" id="COG0777">
    <property type="taxonomic scope" value="Bacteria"/>
</dbReference>
<dbReference type="HOGENOM" id="CLU_015486_1_0_0"/>
<dbReference type="OrthoDB" id="9772975at2"/>
<dbReference type="UniPathway" id="UPA00655">
    <property type="reaction ID" value="UER00711"/>
</dbReference>
<dbReference type="GO" id="GO:0009317">
    <property type="term" value="C:acetyl-CoA carboxylase complex"/>
    <property type="evidence" value="ECO:0007669"/>
    <property type="project" value="InterPro"/>
</dbReference>
<dbReference type="GO" id="GO:0003989">
    <property type="term" value="F:acetyl-CoA carboxylase activity"/>
    <property type="evidence" value="ECO:0007669"/>
    <property type="project" value="InterPro"/>
</dbReference>
<dbReference type="GO" id="GO:0005524">
    <property type="term" value="F:ATP binding"/>
    <property type="evidence" value="ECO:0007669"/>
    <property type="project" value="UniProtKB-KW"/>
</dbReference>
<dbReference type="GO" id="GO:0016743">
    <property type="term" value="F:carboxyl- or carbamoyltransferase activity"/>
    <property type="evidence" value="ECO:0007669"/>
    <property type="project" value="UniProtKB-UniRule"/>
</dbReference>
<dbReference type="GO" id="GO:0008270">
    <property type="term" value="F:zinc ion binding"/>
    <property type="evidence" value="ECO:0007669"/>
    <property type="project" value="UniProtKB-UniRule"/>
</dbReference>
<dbReference type="GO" id="GO:0006633">
    <property type="term" value="P:fatty acid biosynthetic process"/>
    <property type="evidence" value="ECO:0007669"/>
    <property type="project" value="UniProtKB-KW"/>
</dbReference>
<dbReference type="GO" id="GO:2001295">
    <property type="term" value="P:malonyl-CoA biosynthetic process"/>
    <property type="evidence" value="ECO:0007669"/>
    <property type="project" value="UniProtKB-UniRule"/>
</dbReference>
<dbReference type="Gene3D" id="3.90.226.10">
    <property type="entry name" value="2-enoyl-CoA Hydratase, Chain A, domain 1"/>
    <property type="match status" value="1"/>
</dbReference>
<dbReference type="HAMAP" id="MF_01395">
    <property type="entry name" value="AcetylCoA_CT_beta"/>
    <property type="match status" value="1"/>
</dbReference>
<dbReference type="InterPro" id="IPR034733">
    <property type="entry name" value="AcCoA_carboxyl_beta"/>
</dbReference>
<dbReference type="InterPro" id="IPR000438">
    <property type="entry name" value="Acetyl_CoA_COase_Trfase_b_su"/>
</dbReference>
<dbReference type="InterPro" id="IPR029045">
    <property type="entry name" value="ClpP/crotonase-like_dom_sf"/>
</dbReference>
<dbReference type="InterPro" id="IPR011762">
    <property type="entry name" value="COA_CT_N"/>
</dbReference>
<dbReference type="InterPro" id="IPR041010">
    <property type="entry name" value="Znf-ACC"/>
</dbReference>
<dbReference type="NCBIfam" id="TIGR00515">
    <property type="entry name" value="accD"/>
    <property type="match status" value="1"/>
</dbReference>
<dbReference type="PANTHER" id="PTHR42995">
    <property type="entry name" value="ACETYL-COENZYME A CARBOXYLASE CARBOXYL TRANSFERASE SUBUNIT BETA, CHLOROPLASTIC"/>
    <property type="match status" value="1"/>
</dbReference>
<dbReference type="PANTHER" id="PTHR42995:SF5">
    <property type="entry name" value="ACETYL-COENZYME A CARBOXYLASE CARBOXYL TRANSFERASE SUBUNIT BETA, CHLOROPLASTIC"/>
    <property type="match status" value="1"/>
</dbReference>
<dbReference type="Pfam" id="PF01039">
    <property type="entry name" value="Carboxyl_trans"/>
    <property type="match status" value="1"/>
</dbReference>
<dbReference type="Pfam" id="PF17848">
    <property type="entry name" value="Zn_ribbon_ACC"/>
    <property type="match status" value="1"/>
</dbReference>
<dbReference type="PRINTS" id="PR01070">
    <property type="entry name" value="ACCCTRFRASEB"/>
</dbReference>
<dbReference type="SUPFAM" id="SSF52096">
    <property type="entry name" value="ClpP/crotonase"/>
    <property type="match status" value="1"/>
</dbReference>
<dbReference type="PROSITE" id="PS50980">
    <property type="entry name" value="COA_CT_NTER"/>
    <property type="match status" value="1"/>
</dbReference>
<organism>
    <name type="scientific">Hydrogenobaculum sp. (strain Y04AAS1)</name>
    <dbReference type="NCBI Taxonomy" id="380749"/>
    <lineage>
        <taxon>Bacteria</taxon>
        <taxon>Pseudomonadati</taxon>
        <taxon>Aquificota</taxon>
        <taxon>Aquificia</taxon>
        <taxon>Aquificales</taxon>
        <taxon>Aquificaceae</taxon>
        <taxon>Hydrogenobaculum</taxon>
    </lineage>
</organism>
<accession>B4U8Q5</accession>